<organism>
    <name type="scientific">Zea mays</name>
    <name type="common">Maize</name>
    <dbReference type="NCBI Taxonomy" id="4577"/>
    <lineage>
        <taxon>Eukaryota</taxon>
        <taxon>Viridiplantae</taxon>
        <taxon>Streptophyta</taxon>
        <taxon>Embryophyta</taxon>
        <taxon>Tracheophyta</taxon>
        <taxon>Spermatophyta</taxon>
        <taxon>Magnoliopsida</taxon>
        <taxon>Liliopsida</taxon>
        <taxon>Poales</taxon>
        <taxon>Poaceae</taxon>
        <taxon>PACMAD clade</taxon>
        <taxon>Panicoideae</taxon>
        <taxon>Andropogonodae</taxon>
        <taxon>Andropogoneae</taxon>
        <taxon>Tripsacinae</taxon>
        <taxon>Zea</taxon>
    </lineage>
</organism>
<proteinExistence type="evidence at transcript level"/>
<evidence type="ECO:0000250" key="1"/>
<evidence type="ECO:0000255" key="2">
    <source>
        <dbReference type="PROSITE-ProRule" id="PRU10009"/>
    </source>
</evidence>
<evidence type="ECO:0000305" key="3"/>
<keyword id="KW-0963">Cytoplasm</keyword>
<keyword id="KW-0324">Glycolysis</keyword>
<keyword id="KW-0520">NAD</keyword>
<keyword id="KW-0560">Oxidoreductase</keyword>
<keyword id="KW-1185">Reference proteome</keyword>
<protein>
    <recommendedName>
        <fullName>Glyceraldehyde-3-phosphate dehydrogenase 1, cytosolic</fullName>
        <ecNumber>1.2.1.12</ecNumber>
    </recommendedName>
</protein>
<name>G3PC1_MAIZE</name>
<accession>P08735</accession>
<comment type="function">
    <text evidence="1">Key enzyme in glycolysis that catalyzes the first step of the pathway by converting D-glyceraldehyde 3-phosphate (G3P) into 3-phospho-D-glyceroyl phosphate. Essential for the maintenance of cellular ATP levels and carbohydrate metabolism (By similarity).</text>
</comment>
<comment type="catalytic activity">
    <reaction evidence="2">
        <text>D-glyceraldehyde 3-phosphate + phosphate + NAD(+) = (2R)-3-phospho-glyceroyl phosphate + NADH + H(+)</text>
        <dbReference type="Rhea" id="RHEA:10300"/>
        <dbReference type="ChEBI" id="CHEBI:15378"/>
        <dbReference type="ChEBI" id="CHEBI:43474"/>
        <dbReference type="ChEBI" id="CHEBI:57540"/>
        <dbReference type="ChEBI" id="CHEBI:57604"/>
        <dbReference type="ChEBI" id="CHEBI:57945"/>
        <dbReference type="ChEBI" id="CHEBI:59776"/>
        <dbReference type="EC" id="1.2.1.12"/>
    </reaction>
</comment>
<comment type="pathway">
    <text>Carbohydrate degradation; glycolysis; pyruvate from D-glyceraldehyde 3-phosphate: step 1/5.</text>
</comment>
<comment type="subunit">
    <text evidence="1">Homotetramer.</text>
</comment>
<comment type="subcellular location">
    <subcellularLocation>
        <location evidence="1">Cytoplasm</location>
    </subcellularLocation>
</comment>
<comment type="miscellaneous">
    <text>Plants contain two types of GAPDH: cytosolic forms which participate in glycolysis and chloroplast forms which participate in photosynthesis. All the forms are encoded by distinct genes.</text>
</comment>
<comment type="similarity">
    <text evidence="3">Belongs to the glyceraldehyde-3-phosphate dehydrogenase family.</text>
</comment>
<feature type="chain" id="PRO_0000145605" description="Glyceraldehyde-3-phosphate dehydrogenase 1, cytosolic">
    <location>
        <begin position="1"/>
        <end position="337"/>
    </location>
</feature>
<feature type="region of interest" description="Binding to NAD">
    <location>
        <begin position="1"/>
        <end position="151"/>
    </location>
</feature>
<feature type="region of interest" description="Catalytic">
    <location>
        <begin position="152"/>
        <end position="337"/>
    </location>
</feature>
<feature type="active site" description="Nucleophile" evidence="2">
    <location>
        <position position="154"/>
    </location>
</feature>
<feature type="binding site" evidence="1">
    <location>
        <begin position="13"/>
        <end position="14"/>
    </location>
    <ligand>
        <name>NAD(+)</name>
        <dbReference type="ChEBI" id="CHEBI:57540"/>
    </ligand>
</feature>
<feature type="binding site" evidence="1">
    <location>
        <position position="35"/>
    </location>
    <ligand>
        <name>NAD(+)</name>
        <dbReference type="ChEBI" id="CHEBI:57540"/>
    </ligand>
</feature>
<feature type="binding site" evidence="1">
    <location>
        <position position="82"/>
    </location>
    <ligand>
        <name>NAD(+)</name>
        <dbReference type="ChEBI" id="CHEBI:57540"/>
    </ligand>
</feature>
<feature type="binding site" evidence="1">
    <location>
        <begin position="153"/>
        <end position="155"/>
    </location>
    <ligand>
        <name>D-glyceraldehyde 3-phosphate</name>
        <dbReference type="ChEBI" id="CHEBI:59776"/>
    </ligand>
</feature>
<feature type="binding site" evidence="1">
    <location>
        <position position="184"/>
    </location>
    <ligand>
        <name>D-glyceraldehyde 3-phosphate</name>
        <dbReference type="ChEBI" id="CHEBI:59776"/>
    </ligand>
</feature>
<feature type="binding site" evidence="1">
    <location>
        <begin position="213"/>
        <end position="214"/>
    </location>
    <ligand>
        <name>D-glyceraldehyde 3-phosphate</name>
        <dbReference type="ChEBI" id="CHEBI:59776"/>
    </ligand>
</feature>
<feature type="binding site" evidence="1">
    <location>
        <position position="236"/>
    </location>
    <ligand>
        <name>D-glyceraldehyde 3-phosphate</name>
        <dbReference type="ChEBI" id="CHEBI:59776"/>
    </ligand>
</feature>
<feature type="binding site" evidence="1">
    <location>
        <position position="318"/>
    </location>
    <ligand>
        <name>NAD(+)</name>
        <dbReference type="ChEBI" id="CHEBI:57540"/>
    </ligand>
</feature>
<feature type="site" description="Activates thiol group during catalysis" evidence="1">
    <location>
        <position position="181"/>
    </location>
</feature>
<feature type="sequence conflict" description="In Ref. 2; CAA30151." evidence="3" ref="2">
    <original>T</original>
    <variation>S</variation>
    <location>
        <position position="336"/>
    </location>
</feature>
<sequence>MGKIKIGINGFGRIGRLVARVALQSEDVELVAVNDPFITTDYMTYMFKYDTVHGHWKHSDITLKDSKTLLFGDKPVTVFGIRNPEEIPWGEAGAEYVVESTGVFTDKDKAAAHLKGGAKKVVISAPSKDAPMFVVGVNEDKYTSDVNIVSNASCTTNCLAPLAKVIHDNFGIVEGLMTTVHAITATQKTVDGPSAKDWRGGRAASFNIIPSSTGAAKAVGKVLPDLNGKLTGMSFRVPTVDVSVVDLTVRIEKGASYEDIKKAIKAASEGPLKGIMGYVEEDLVSTDFLGDSRSSIFDAKAGIALNDHFVKLVSWYDNEWGYSNRVVDLIRHMFKTQ</sequence>
<gene>
    <name type="primary">GAPC1</name>
    <name type="synonym">GAPC</name>
    <name type="synonym">GPC1</name>
</gene>
<dbReference type="EC" id="1.2.1.12"/>
<dbReference type="EMBL" id="X07156">
    <property type="protein sequence ID" value="CAA30151.1"/>
    <property type="molecule type" value="mRNA"/>
</dbReference>
<dbReference type="EMBL" id="X15596">
    <property type="protein sequence ID" value="CAA33620.1"/>
    <property type="molecule type" value="Genomic_DNA"/>
</dbReference>
<dbReference type="PIR" id="S00354">
    <property type="entry name" value="DEZMGC"/>
</dbReference>
<dbReference type="RefSeq" id="NP_001105413.1">
    <property type="nucleotide sequence ID" value="NM_001111943.1"/>
</dbReference>
<dbReference type="SMR" id="P08735"/>
<dbReference type="FunCoup" id="P08735">
    <property type="interactions" value="516"/>
</dbReference>
<dbReference type="STRING" id="4577.P08735"/>
<dbReference type="PaxDb" id="4577-GRMZM2G046804_P07"/>
<dbReference type="ProMEX" id="P08735"/>
<dbReference type="GeneID" id="542367"/>
<dbReference type="KEGG" id="zma:542367"/>
<dbReference type="MaizeGDB" id="13873"/>
<dbReference type="eggNOG" id="KOG0657">
    <property type="taxonomic scope" value="Eukaryota"/>
</dbReference>
<dbReference type="InParanoid" id="P08735"/>
<dbReference type="OrthoDB" id="1152826at2759"/>
<dbReference type="UniPathway" id="UPA00109">
    <property type="reaction ID" value="UER00184"/>
</dbReference>
<dbReference type="Proteomes" id="UP000007305">
    <property type="component" value="Unplaced"/>
</dbReference>
<dbReference type="ExpressionAtlas" id="P08735">
    <property type="expression patterns" value="baseline and differential"/>
</dbReference>
<dbReference type="GO" id="GO:0005829">
    <property type="term" value="C:cytosol"/>
    <property type="evidence" value="ECO:0000318"/>
    <property type="project" value="GO_Central"/>
</dbReference>
<dbReference type="GO" id="GO:0032991">
    <property type="term" value="C:protein-containing complex"/>
    <property type="evidence" value="ECO:0000304"/>
    <property type="project" value="AgBase"/>
</dbReference>
<dbReference type="GO" id="GO:0004365">
    <property type="term" value="F:glyceraldehyde-3-phosphate dehydrogenase (NAD+) (phosphorylating) activity"/>
    <property type="evidence" value="ECO:0000318"/>
    <property type="project" value="GO_Central"/>
</dbReference>
<dbReference type="GO" id="GO:0070403">
    <property type="term" value="F:NAD+ binding"/>
    <property type="evidence" value="ECO:0000304"/>
    <property type="project" value="AgBase"/>
</dbReference>
<dbReference type="GO" id="GO:0050661">
    <property type="term" value="F:NADP binding"/>
    <property type="evidence" value="ECO:0007669"/>
    <property type="project" value="InterPro"/>
</dbReference>
<dbReference type="GO" id="GO:0042301">
    <property type="term" value="F:phosphate ion binding"/>
    <property type="evidence" value="ECO:0000304"/>
    <property type="project" value="AgBase"/>
</dbReference>
<dbReference type="GO" id="GO:0006006">
    <property type="term" value="P:glucose metabolic process"/>
    <property type="evidence" value="ECO:0007669"/>
    <property type="project" value="InterPro"/>
</dbReference>
<dbReference type="GO" id="GO:0006096">
    <property type="term" value="P:glycolytic process"/>
    <property type="evidence" value="ECO:0000318"/>
    <property type="project" value="GO_Central"/>
</dbReference>
<dbReference type="GO" id="GO:0009416">
    <property type="term" value="P:response to light stimulus"/>
    <property type="evidence" value="ECO:0000304"/>
    <property type="project" value="AgBase"/>
</dbReference>
<dbReference type="CDD" id="cd18126">
    <property type="entry name" value="GAPDH_I_C"/>
    <property type="match status" value="1"/>
</dbReference>
<dbReference type="CDD" id="cd05214">
    <property type="entry name" value="GAPDH_I_N"/>
    <property type="match status" value="1"/>
</dbReference>
<dbReference type="FunFam" id="3.30.360.10:FF:000001">
    <property type="entry name" value="Glyceraldehyde-3-phosphate dehydrogenase"/>
    <property type="match status" value="1"/>
</dbReference>
<dbReference type="FunFam" id="3.40.50.720:FF:000020">
    <property type="entry name" value="Glyceraldehyde-3-phosphate dehydrogenase"/>
    <property type="match status" value="1"/>
</dbReference>
<dbReference type="Gene3D" id="3.30.360.10">
    <property type="entry name" value="Dihydrodipicolinate Reductase, domain 2"/>
    <property type="match status" value="1"/>
</dbReference>
<dbReference type="Gene3D" id="3.40.50.720">
    <property type="entry name" value="NAD(P)-binding Rossmann-like Domain"/>
    <property type="match status" value="1"/>
</dbReference>
<dbReference type="InterPro" id="IPR020831">
    <property type="entry name" value="GlycerAld/Erythrose_P_DH"/>
</dbReference>
<dbReference type="InterPro" id="IPR020830">
    <property type="entry name" value="GlycerAld_3-P_DH_AS"/>
</dbReference>
<dbReference type="InterPro" id="IPR020829">
    <property type="entry name" value="GlycerAld_3-P_DH_cat"/>
</dbReference>
<dbReference type="InterPro" id="IPR020828">
    <property type="entry name" value="GlycerAld_3-P_DH_NAD(P)-bd"/>
</dbReference>
<dbReference type="InterPro" id="IPR006424">
    <property type="entry name" value="Glyceraldehyde-3-P_DH_1"/>
</dbReference>
<dbReference type="InterPro" id="IPR036291">
    <property type="entry name" value="NAD(P)-bd_dom_sf"/>
</dbReference>
<dbReference type="NCBIfam" id="TIGR01534">
    <property type="entry name" value="GAPDH-I"/>
    <property type="match status" value="1"/>
</dbReference>
<dbReference type="PANTHER" id="PTHR10836">
    <property type="entry name" value="GLYCERALDEHYDE 3-PHOSPHATE DEHYDROGENASE"/>
    <property type="match status" value="1"/>
</dbReference>
<dbReference type="PANTHER" id="PTHR10836:SF133">
    <property type="entry name" value="GLYCERALDEHYDE-3-PHOSPHATE DEHYDROGENASE 1, CYTOSOLIC"/>
    <property type="match status" value="1"/>
</dbReference>
<dbReference type="Pfam" id="PF02800">
    <property type="entry name" value="Gp_dh_C"/>
    <property type="match status" value="1"/>
</dbReference>
<dbReference type="Pfam" id="PF00044">
    <property type="entry name" value="Gp_dh_N"/>
    <property type="match status" value="1"/>
</dbReference>
<dbReference type="PIRSF" id="PIRSF000149">
    <property type="entry name" value="GAP_DH"/>
    <property type="match status" value="1"/>
</dbReference>
<dbReference type="PRINTS" id="PR00078">
    <property type="entry name" value="G3PDHDRGNASE"/>
</dbReference>
<dbReference type="SMART" id="SM00846">
    <property type="entry name" value="Gp_dh_N"/>
    <property type="match status" value="1"/>
</dbReference>
<dbReference type="SUPFAM" id="SSF55347">
    <property type="entry name" value="Glyceraldehyde-3-phosphate dehydrogenase-like, C-terminal domain"/>
    <property type="match status" value="1"/>
</dbReference>
<dbReference type="SUPFAM" id="SSF51735">
    <property type="entry name" value="NAD(P)-binding Rossmann-fold domains"/>
    <property type="match status" value="1"/>
</dbReference>
<dbReference type="PROSITE" id="PS00071">
    <property type="entry name" value="GAPDH"/>
    <property type="match status" value="1"/>
</dbReference>
<reference key="1">
    <citation type="journal article" date="1989" name="J. Mol. Biol.">
        <title>Structure, evolution and anaerobic regulation of a nuclear gene encoding cytosolic glyceraldehyde-3-phosphate dehydrogenase from maize.</title>
        <authorList>
            <person name="Martinez P."/>
            <person name="Martin W.F."/>
            <person name="Cerff R."/>
        </authorList>
    </citation>
    <scope>NUCLEOTIDE SEQUENCE [GENOMIC DNA]</scope>
    <source>
        <strain>cv. Wisconsin 22</strain>
    </source>
</reference>
<reference key="2">
    <citation type="journal article" date="1987" name="J. Mol. Evol.">
        <title>Endosymbiotic origin and codon bias of the nuclear gene for chloroplast glyceraldehyde-3-phosphate dehydrogenase from maize.</title>
        <authorList>
            <person name="Brinkmann H."/>
            <person name="Martinez P."/>
            <person name="Quigley F."/>
            <person name="Martin W.F."/>
            <person name="Cerff R."/>
        </authorList>
    </citation>
    <scope>NUCLEOTIDE SEQUENCE [MRNA]</scope>
</reference>